<reference key="1">
    <citation type="journal article" date="1997" name="DNA Res.">
        <title>Structural analysis of Arabidopsis thaliana chromosome 5. III. Sequence features of the regions of 1,191,918 bp covered by seventeen physically assigned P1 clones.</title>
        <authorList>
            <person name="Nakamura Y."/>
            <person name="Sato S."/>
            <person name="Kaneko T."/>
            <person name="Kotani H."/>
            <person name="Asamizu E."/>
            <person name="Miyajima N."/>
            <person name="Tabata S."/>
        </authorList>
    </citation>
    <scope>NUCLEOTIDE SEQUENCE [LARGE SCALE GENOMIC DNA]</scope>
    <source>
        <strain>cv. Columbia</strain>
    </source>
</reference>
<reference key="2">
    <citation type="journal article" date="2017" name="Plant J.">
        <title>Araport11: a complete reannotation of the Arabidopsis thaliana reference genome.</title>
        <authorList>
            <person name="Cheng C.Y."/>
            <person name="Krishnakumar V."/>
            <person name="Chan A.P."/>
            <person name="Thibaud-Nissen F."/>
            <person name="Schobel S."/>
            <person name="Town C.D."/>
        </authorList>
    </citation>
    <scope>GENOME REANNOTATION</scope>
    <source>
        <strain>cv. Columbia</strain>
    </source>
</reference>
<reference key="3">
    <citation type="journal article" date="2003" name="Science">
        <title>Empirical analysis of transcriptional activity in the Arabidopsis genome.</title>
        <authorList>
            <person name="Yamada K."/>
            <person name="Lim J."/>
            <person name="Dale J.M."/>
            <person name="Chen H."/>
            <person name="Shinn P."/>
            <person name="Palm C.J."/>
            <person name="Southwick A.M."/>
            <person name="Wu H.C."/>
            <person name="Kim C.J."/>
            <person name="Nguyen M."/>
            <person name="Pham P.K."/>
            <person name="Cheuk R.F."/>
            <person name="Karlin-Newmann G."/>
            <person name="Liu S.X."/>
            <person name="Lam B."/>
            <person name="Sakano H."/>
            <person name="Wu T."/>
            <person name="Yu G."/>
            <person name="Miranda M."/>
            <person name="Quach H.L."/>
            <person name="Tripp M."/>
            <person name="Chang C.H."/>
            <person name="Lee J.M."/>
            <person name="Toriumi M.J."/>
            <person name="Chan M.M."/>
            <person name="Tang C.C."/>
            <person name="Onodera C.S."/>
            <person name="Deng J.M."/>
            <person name="Akiyama K."/>
            <person name="Ansari Y."/>
            <person name="Arakawa T."/>
            <person name="Banh J."/>
            <person name="Banno F."/>
            <person name="Bowser L."/>
            <person name="Brooks S.Y."/>
            <person name="Carninci P."/>
            <person name="Chao Q."/>
            <person name="Choy N."/>
            <person name="Enju A."/>
            <person name="Goldsmith A.D."/>
            <person name="Gurjal M."/>
            <person name="Hansen N.F."/>
            <person name="Hayashizaki Y."/>
            <person name="Johnson-Hopson C."/>
            <person name="Hsuan V.W."/>
            <person name="Iida K."/>
            <person name="Karnes M."/>
            <person name="Khan S."/>
            <person name="Koesema E."/>
            <person name="Ishida J."/>
            <person name="Jiang P.X."/>
            <person name="Jones T."/>
            <person name="Kawai J."/>
            <person name="Kamiya A."/>
            <person name="Meyers C."/>
            <person name="Nakajima M."/>
            <person name="Narusaka M."/>
            <person name="Seki M."/>
            <person name="Sakurai T."/>
            <person name="Satou M."/>
            <person name="Tamse R."/>
            <person name="Vaysberg M."/>
            <person name="Wallender E.K."/>
            <person name="Wong C."/>
            <person name="Yamamura Y."/>
            <person name="Yuan S."/>
            <person name="Shinozaki K."/>
            <person name="Davis R.W."/>
            <person name="Theologis A."/>
            <person name="Ecker J.R."/>
        </authorList>
    </citation>
    <scope>NUCLEOTIDE SEQUENCE [LARGE SCALE MRNA]</scope>
    <source>
        <strain>cv. Columbia</strain>
    </source>
</reference>
<reference key="4">
    <citation type="journal article" date="2008" name="Proc. Natl. Acad. Sci. U.S.A.">
        <title>Prefoldin 6 is required for normal microtubule dynamics and organization in Arabidopsis.</title>
        <authorList>
            <person name="Gu Y."/>
            <person name="Deng Z."/>
            <person name="Paredez A.R."/>
            <person name="DeBolt S."/>
            <person name="Wang Z.-Y."/>
            <person name="Somerville C."/>
        </authorList>
    </citation>
    <scope>INTERACTION WITH PFD6</scope>
    <source>
        <strain>cv. Columbia</strain>
    </source>
</reference>
<reference key="5">
    <citation type="journal article" date="2009" name="Mol. Plant">
        <title>Prefoldins 3 and 5 play an essential role in Arabidopsis tolerance to salt stress.</title>
        <authorList>
            <person name="Rodriguez-Milla M.A."/>
            <person name="Salinas J."/>
        </authorList>
    </citation>
    <scope>FUNCTION</scope>
    <scope>DISRUPTION PHENOTYPE</scope>
    <scope>GENE FAMILY</scope>
    <scope>NOMENCLATURE</scope>
</reference>
<reference key="6">
    <citation type="journal article" date="2013" name="Curr. Biol.">
        <title>Dynamic regulation of cortical microtubule organization through prefoldin-DELLA interaction.</title>
        <authorList>
            <person name="Locascio A."/>
            <person name="Blazquez M.A."/>
            <person name="Alabadi D."/>
        </authorList>
    </citation>
    <scope>FUNCTION</scope>
    <scope>SUBCELLULAR LOCATION</scope>
    <scope>INTERACTION WITH GAI</scope>
</reference>
<reference key="7">
    <citation type="journal article" date="2017" name="Mol. Plant">
        <title>Prefoldins negatively regulate cold acclimation in Arabidopsis thaliana by promoting nuclear proteasome-mediated HY5 degradation.</title>
        <authorList>
            <person name="Perea-Resa C."/>
            <person name="Rodriguez-Milla M.A."/>
            <person name="Iniesto E."/>
            <person name="Rubio V."/>
            <person name="Salinas J."/>
        </authorList>
    </citation>
    <scope>FUNCTION</scope>
    <scope>DISRUPTION PHENOTYPE</scope>
    <scope>INDUCTION BY COLD</scope>
    <source>
        <strain>cv. Columbia</strain>
    </source>
</reference>
<reference key="8">
    <citation type="journal article" date="2018" name="Proc. Natl. Acad. Sci. U.S.A.">
        <title>Gibberellin DELLA signaling targets the retromer complex to redirect protein trafficking to the plasma membrane.</title>
        <authorList>
            <person name="Salanenka Y."/>
            <person name="Verstraeten I."/>
            <person name="Loefke C."/>
            <person name="Tabata K."/>
            <person name="Naramoto S."/>
            <person name="Glanc M."/>
            <person name="Friml J."/>
        </authorList>
    </citation>
    <scope>FUNCTION</scope>
    <scope>DISRUPTION PHENOTYPE</scope>
    <source>
        <strain>cv. Columbia</strain>
    </source>
</reference>
<reference key="9">
    <citation type="journal article" date="2020" name="Nucleic Acids Res.">
        <title>Prefoldins contribute to maintaining the levels of the spliceosome LSM2-8 complex through Hsp90 in Arabidopsis.</title>
        <authorList>
            <person name="Esteve-Bruna D."/>
            <person name="Carrasco-Lopez C."/>
            <person name="Blanco-Tourinan N."/>
            <person name="Iserte J."/>
            <person name="Calleja-Cabrera J."/>
            <person name="Perea-Resa C."/>
            <person name="Urbez C."/>
            <person name="Carrasco P."/>
            <person name="Yanovsky M.J."/>
            <person name="Blazquez M.A."/>
            <person name="Salinas J."/>
            <person name="Alabadi D."/>
        </authorList>
    </citation>
    <scope>INTERACTION WITH LSM8</scope>
    <source>
        <strain>cv. Columbia</strain>
    </source>
</reference>
<dbReference type="EMBL" id="AB007648">
    <property type="protein sequence ID" value="BAB11184.1"/>
    <property type="molecule type" value="Genomic_DNA"/>
</dbReference>
<dbReference type="EMBL" id="CP002688">
    <property type="protein sequence ID" value="AED93148.1"/>
    <property type="molecule type" value="Genomic_DNA"/>
</dbReference>
<dbReference type="EMBL" id="AY063957">
    <property type="protein sequence ID" value="AAL36313.1"/>
    <property type="molecule type" value="mRNA"/>
</dbReference>
<dbReference type="EMBL" id="AY096400">
    <property type="protein sequence ID" value="AAM20040.1"/>
    <property type="molecule type" value="mRNA"/>
</dbReference>
<dbReference type="RefSeq" id="NP_197720.1">
    <property type="nucleotide sequence ID" value="NM_122235.2"/>
</dbReference>
<dbReference type="SMR" id="P57742"/>
<dbReference type="BioGRID" id="17668">
    <property type="interactions" value="11"/>
</dbReference>
<dbReference type="FunCoup" id="P57742">
    <property type="interactions" value="4511"/>
</dbReference>
<dbReference type="IntAct" id="P57742">
    <property type="interactions" value="1"/>
</dbReference>
<dbReference type="STRING" id="3702.P57742"/>
<dbReference type="MetOSite" id="P57742"/>
<dbReference type="PaxDb" id="3702-AT5G23290.1"/>
<dbReference type="ProteomicsDB" id="236311"/>
<dbReference type="DNASU" id="832393"/>
<dbReference type="EnsemblPlants" id="AT5G23290.1">
    <property type="protein sequence ID" value="AT5G23290.1"/>
    <property type="gene ID" value="AT5G23290"/>
</dbReference>
<dbReference type="GeneID" id="832393"/>
<dbReference type="Gramene" id="AT5G23290.1">
    <property type="protein sequence ID" value="AT5G23290.1"/>
    <property type="gene ID" value="AT5G23290"/>
</dbReference>
<dbReference type="KEGG" id="ath:AT5G23290"/>
<dbReference type="Araport" id="AT5G23290"/>
<dbReference type="TAIR" id="AT5G23290">
    <property type="gene designation" value="PFD5"/>
</dbReference>
<dbReference type="eggNOG" id="KOG3048">
    <property type="taxonomic scope" value="Eukaryota"/>
</dbReference>
<dbReference type="HOGENOM" id="CLU_091867_0_1_1"/>
<dbReference type="InParanoid" id="P57742"/>
<dbReference type="OMA" id="QAKFKAC"/>
<dbReference type="OrthoDB" id="10267474at2759"/>
<dbReference type="PhylomeDB" id="P57742"/>
<dbReference type="PRO" id="PR:P57742"/>
<dbReference type="Proteomes" id="UP000006548">
    <property type="component" value="Chromosome 5"/>
</dbReference>
<dbReference type="ExpressionAtlas" id="P57742">
    <property type="expression patterns" value="baseline and differential"/>
</dbReference>
<dbReference type="GO" id="GO:0005737">
    <property type="term" value="C:cytoplasm"/>
    <property type="evidence" value="ECO:0000314"/>
    <property type="project" value="UniProtKB"/>
</dbReference>
<dbReference type="GO" id="GO:0005634">
    <property type="term" value="C:nucleus"/>
    <property type="evidence" value="ECO:0000314"/>
    <property type="project" value="UniProtKB"/>
</dbReference>
<dbReference type="GO" id="GO:0009536">
    <property type="term" value="C:plastid"/>
    <property type="evidence" value="ECO:0007005"/>
    <property type="project" value="TAIR"/>
</dbReference>
<dbReference type="GO" id="GO:0016272">
    <property type="term" value="C:prefoldin complex"/>
    <property type="evidence" value="ECO:0000314"/>
    <property type="project" value="UniProtKB"/>
</dbReference>
<dbReference type="GO" id="GO:0051082">
    <property type="term" value="F:unfolded protein binding"/>
    <property type="evidence" value="ECO:0007669"/>
    <property type="project" value="InterPro"/>
</dbReference>
<dbReference type="GO" id="GO:0071370">
    <property type="term" value="P:cellular response to gibberellin stimulus"/>
    <property type="evidence" value="ECO:0000314"/>
    <property type="project" value="UniProtKB"/>
</dbReference>
<dbReference type="GO" id="GO:0009631">
    <property type="term" value="P:cold acclimation"/>
    <property type="evidence" value="ECO:0000315"/>
    <property type="project" value="UniProtKB"/>
</dbReference>
<dbReference type="GO" id="GO:0043622">
    <property type="term" value="P:cortical microtubule organization"/>
    <property type="evidence" value="ECO:0000314"/>
    <property type="project" value="UniProtKB"/>
</dbReference>
<dbReference type="GO" id="GO:0006397">
    <property type="term" value="P:mRNA processing"/>
    <property type="evidence" value="ECO:0000250"/>
    <property type="project" value="UniProtKB"/>
</dbReference>
<dbReference type="GO" id="GO:0006457">
    <property type="term" value="P:protein folding"/>
    <property type="evidence" value="ECO:0000315"/>
    <property type="project" value="UniProtKB"/>
</dbReference>
<dbReference type="GO" id="GO:1901703">
    <property type="term" value="P:protein localization involved in auxin polar transport"/>
    <property type="evidence" value="ECO:0000315"/>
    <property type="project" value="UniProtKB"/>
</dbReference>
<dbReference type="GO" id="GO:0009409">
    <property type="term" value="P:response to cold"/>
    <property type="evidence" value="ECO:0000270"/>
    <property type="project" value="UniProtKB"/>
</dbReference>
<dbReference type="GO" id="GO:0009651">
    <property type="term" value="P:response to salt stress"/>
    <property type="evidence" value="ECO:0000315"/>
    <property type="project" value="UniProtKB"/>
</dbReference>
<dbReference type="CDD" id="cd23157">
    <property type="entry name" value="Prefoldin_5"/>
    <property type="match status" value="1"/>
</dbReference>
<dbReference type="FunFam" id="1.10.287.370:FF:000012">
    <property type="entry name" value="Probable prefoldin subunit 5"/>
    <property type="match status" value="1"/>
</dbReference>
<dbReference type="Gene3D" id="1.10.287.370">
    <property type="match status" value="1"/>
</dbReference>
<dbReference type="InterPro" id="IPR011599">
    <property type="entry name" value="PFD_alpha_archaea"/>
</dbReference>
<dbReference type="InterPro" id="IPR009053">
    <property type="entry name" value="Prefoldin"/>
</dbReference>
<dbReference type="InterPro" id="IPR004127">
    <property type="entry name" value="Prefoldin_subunit_alpha"/>
</dbReference>
<dbReference type="NCBIfam" id="TIGR00293">
    <property type="entry name" value="prefoldin subunit alpha"/>
    <property type="match status" value="1"/>
</dbReference>
<dbReference type="PANTHER" id="PTHR12674">
    <property type="entry name" value="PREFOLDIN SUBUNIT 5"/>
    <property type="match status" value="1"/>
</dbReference>
<dbReference type="PANTHER" id="PTHR12674:SF2">
    <property type="entry name" value="PREFOLDIN SUBUNIT 5"/>
    <property type="match status" value="1"/>
</dbReference>
<dbReference type="Pfam" id="PF02996">
    <property type="entry name" value="Prefoldin"/>
    <property type="match status" value="1"/>
</dbReference>
<dbReference type="SUPFAM" id="SSF46579">
    <property type="entry name" value="Prefoldin"/>
    <property type="match status" value="1"/>
</dbReference>
<gene>
    <name evidence="10" type="primary">PFD5</name>
    <name evidence="10" type="synonym">GIM5</name>
    <name evidence="12" type="ordered locus">At5g23290</name>
    <name evidence="13" type="ORF">MKD15.15</name>
</gene>
<feature type="chain" id="PRO_0000153666" description="Prefoldin subunit 5">
    <location>
        <begin position="1"/>
        <end position="151"/>
    </location>
</feature>
<feature type="coiled-coil region" evidence="3">
    <location>
        <begin position="15"/>
        <end position="35"/>
    </location>
</feature>
<sequence length="151" mass="16410">MASSSSRGEMEKMGIDQLKALKEQADLEVNLLQDSLNNIRTATVRLDAAAAALNDLSLRPQGKKMLVPLTASLYVPGTLDEADKVLVDIGTGYFIEKTMDDGKDYCQRKINLLKSNFDQLFEVAAKKKSVADEAGMVLQAKVKQLTAATTS</sequence>
<keyword id="KW-0143">Chaperone</keyword>
<keyword id="KW-0175">Coiled coil</keyword>
<keyword id="KW-0963">Cytoplasm</keyword>
<keyword id="KW-0539">Nucleus</keyword>
<keyword id="KW-1185">Reference proteome</keyword>
<protein>
    <recommendedName>
        <fullName evidence="10">Prefoldin subunit 5</fullName>
    </recommendedName>
    <alternativeName>
        <fullName evidence="10">Gene involved in microtubule biogenesis 5</fullName>
    </alternativeName>
</protein>
<proteinExistence type="evidence at protein level"/>
<comment type="function">
    <text evidence="2 5 6 7 8">Binds specifically to cytosolic chaperonin (c-CPN) and transfers target proteins to it (PubMed:19825635). Binds to nascent polypeptide chain and promotes folding in an environment in which there are many competing pathways for nonnative proteins (PubMed:19825635). Together with other chaperonins, contribute to the regulation of gene expression by modulating the spliceosome function on pre-mRNA splicing post-transcriptionally by acting as a co-chaperone of Hsp90 to control levels of LSM8 (By similarity). Required for the biogenesis of tubulins and for subsequent microtubules (MTs) organization and dynamicity (PubMed:19825635). Necessary for tolerance to NaCl salt stress (PubMed:19825635). Involved in the process leading to microtubules dissociation in response to gibberellic acid (GA) probably due to the DELLA proteins-mediated translocation of the prefoldin co-chaperone complex from the cytoplasm to the nucleus (PubMed:23583555). Prevents cold acclimation (e.g. 7 days at 4 degrees Celsius) in a DELLA proteins-dependent manner by promoting nuclear proteasome-mediated HY5 degradation, thus modulating the expression of several genes and reducing anthocyanin biosynthesis, but seems not involved in constitutive freezing tolerance (PubMed:28412546). Contributes to the GA-dependent regulation of PIN2 trafficking at the plasma membrane, thus influencing auxin flux (PubMed:29463731).</text>
</comment>
<comment type="subunit">
    <text evidence="1 4 6">Heterohexamer of two PFD-alpha type and four PFD-beta type subunits forming prefoldin co-chaperone complex (By similarity). Interacts with PFD6 (PubMed:19004800). Binds to the DELLA protein GAI (PubMed:23583555).</text>
</comment>
<comment type="subcellular location">
    <subcellularLocation>
        <location evidence="6">Cytoplasm</location>
    </subcellularLocation>
    <subcellularLocation>
        <location evidence="6">Nucleus</location>
    </subcellularLocation>
    <text evidence="6 9">In the presence of gibberellic acid (GA) and at room temperature, the prefoldin complex stays in the cytoplasm and is functional (PubMed:23583555). But in the absence of GA or in response to cold, the prefoldin complex is localized to the nucleus in the presence of DELLA proteins, which severely compromises alpha/beta-tubulin heterodimer availability, thus affecting microtubules (MTs) organization (PubMed:23583555). This changing subcellular localization follows a daily rhythm coordinated oscillation (PubMed:23583555). Interacts with LSM8, a specific subunit of the LSM2-8 complex, which is core components of the spliceosome (PubMed:32396196).</text>
</comment>
<comment type="induction">
    <text evidence="7">Accumulates in response to cold.</text>
</comment>
<comment type="disruption phenotype">
    <text evidence="5 7 8">Reduced levels of alpha- and beta-tubulin (PubMed:19825635). Altered development patterns and disturbed microtubules (MTs) organization (PubMed:19825635). Hypersensitivity to high NaCl salt levels (PubMed:19825635). Increased capacity to tolerate freezing temperatures upon acclimation (e.g. 7 days at 4 degrees Celsius) associated with a continuous accumulation of HY5 in cold conditions (PubMed:28412546). The pfd5 pfd6 double mutant is less sensitive to gibberellic acid (GA)-mediated mobilization of PIN2 at the plasma membrane (PubMed:29463731).</text>
</comment>
<comment type="similarity">
    <text evidence="11">Belongs to the prefoldin subunit alpha family.</text>
</comment>
<name>PFD5_ARATH</name>
<evidence type="ECO:0000250" key="1">
    <source>
        <dbReference type="UniProtKB" id="P46988"/>
    </source>
</evidence>
<evidence type="ECO:0000250" key="2">
    <source>
        <dbReference type="UniProtKB" id="Q2HIK4"/>
    </source>
</evidence>
<evidence type="ECO:0000255" key="3"/>
<evidence type="ECO:0000269" key="4">
    <source>
    </source>
</evidence>
<evidence type="ECO:0000269" key="5">
    <source>
    </source>
</evidence>
<evidence type="ECO:0000269" key="6">
    <source>
    </source>
</evidence>
<evidence type="ECO:0000269" key="7">
    <source>
    </source>
</evidence>
<evidence type="ECO:0000269" key="8">
    <source>
    </source>
</evidence>
<evidence type="ECO:0000269" key="9">
    <source>
    </source>
</evidence>
<evidence type="ECO:0000303" key="10">
    <source>
    </source>
</evidence>
<evidence type="ECO:0000305" key="11"/>
<evidence type="ECO:0000312" key="12">
    <source>
        <dbReference type="Araport" id="AT5G23290"/>
    </source>
</evidence>
<evidence type="ECO:0000312" key="13">
    <source>
        <dbReference type="EMBL" id="BAB11184.1"/>
    </source>
</evidence>
<accession>P57742</accession>
<organism>
    <name type="scientific">Arabidopsis thaliana</name>
    <name type="common">Mouse-ear cress</name>
    <dbReference type="NCBI Taxonomy" id="3702"/>
    <lineage>
        <taxon>Eukaryota</taxon>
        <taxon>Viridiplantae</taxon>
        <taxon>Streptophyta</taxon>
        <taxon>Embryophyta</taxon>
        <taxon>Tracheophyta</taxon>
        <taxon>Spermatophyta</taxon>
        <taxon>Magnoliopsida</taxon>
        <taxon>eudicotyledons</taxon>
        <taxon>Gunneridae</taxon>
        <taxon>Pentapetalae</taxon>
        <taxon>rosids</taxon>
        <taxon>malvids</taxon>
        <taxon>Brassicales</taxon>
        <taxon>Brassicaceae</taxon>
        <taxon>Camelineae</taxon>
        <taxon>Arabidopsis</taxon>
    </lineage>
</organism>